<comment type="function">
    <text evidence="1">Catalyzes the ATP-dependent phosphorylation of thiamine to thiamine phosphate. Is involved in thiamine salvage.</text>
</comment>
<comment type="catalytic activity">
    <reaction evidence="1">
        <text>thiamine + ATP = thiamine phosphate + ADP + H(+)</text>
        <dbReference type="Rhea" id="RHEA:12012"/>
        <dbReference type="ChEBI" id="CHEBI:15378"/>
        <dbReference type="ChEBI" id="CHEBI:18385"/>
        <dbReference type="ChEBI" id="CHEBI:30616"/>
        <dbReference type="ChEBI" id="CHEBI:37575"/>
        <dbReference type="ChEBI" id="CHEBI:456216"/>
        <dbReference type="EC" id="2.7.1.89"/>
    </reaction>
    <physiologicalReaction direction="left-to-right" evidence="1">
        <dbReference type="Rhea" id="RHEA:12013"/>
    </physiologicalReaction>
</comment>
<comment type="pathway">
    <text evidence="1">Cofactor biosynthesis; thiamine diphosphate biosynthesis; thiamine phosphate from thiamine: step 1/1.</text>
</comment>
<comment type="similarity">
    <text evidence="1">Belongs to the thiamine kinase family.</text>
</comment>
<proteinExistence type="inferred from homology"/>
<keyword id="KW-0067">ATP-binding</keyword>
<keyword id="KW-0418">Kinase</keyword>
<keyword id="KW-0547">Nucleotide-binding</keyword>
<keyword id="KW-0808">Transferase</keyword>
<dbReference type="EC" id="2.7.1.89" evidence="1"/>
<dbReference type="EMBL" id="AM933173">
    <property type="protein sequence ID" value="CAR37765.1"/>
    <property type="molecule type" value="Genomic_DNA"/>
</dbReference>
<dbReference type="RefSeq" id="WP_001257329.1">
    <property type="nucleotide sequence ID" value="NC_011274.1"/>
</dbReference>
<dbReference type="SMR" id="B5RB94"/>
<dbReference type="KEGG" id="seg:SG1914"/>
<dbReference type="HOGENOM" id="CLU_055115_2_1_6"/>
<dbReference type="UniPathway" id="UPA00060">
    <property type="reaction ID" value="UER00596"/>
</dbReference>
<dbReference type="Proteomes" id="UP000008321">
    <property type="component" value="Chromosome"/>
</dbReference>
<dbReference type="GO" id="GO:0005524">
    <property type="term" value="F:ATP binding"/>
    <property type="evidence" value="ECO:0007669"/>
    <property type="project" value="UniProtKB-KW"/>
</dbReference>
<dbReference type="GO" id="GO:0019165">
    <property type="term" value="F:thiamine kinase activity"/>
    <property type="evidence" value="ECO:0007669"/>
    <property type="project" value="UniProtKB-UniRule"/>
</dbReference>
<dbReference type="GO" id="GO:0009229">
    <property type="term" value="P:thiamine diphosphate biosynthetic process"/>
    <property type="evidence" value="ECO:0007669"/>
    <property type="project" value="UniProtKB-UniRule"/>
</dbReference>
<dbReference type="GO" id="GO:0006772">
    <property type="term" value="P:thiamine metabolic process"/>
    <property type="evidence" value="ECO:0007669"/>
    <property type="project" value="InterPro"/>
</dbReference>
<dbReference type="Gene3D" id="3.90.1200.10">
    <property type="match status" value="1"/>
</dbReference>
<dbReference type="HAMAP" id="MF_01604">
    <property type="entry name" value="Thiamine_kinase"/>
    <property type="match status" value="1"/>
</dbReference>
<dbReference type="InterPro" id="IPR002575">
    <property type="entry name" value="Aminoglycoside_PTrfase"/>
</dbReference>
<dbReference type="InterPro" id="IPR011009">
    <property type="entry name" value="Kinase-like_dom_sf"/>
</dbReference>
<dbReference type="InterPro" id="IPR014093">
    <property type="entry name" value="Thiamine_kinase"/>
</dbReference>
<dbReference type="NCBIfam" id="NF007620">
    <property type="entry name" value="PRK10271.1"/>
    <property type="match status" value="1"/>
</dbReference>
<dbReference type="NCBIfam" id="TIGR02721">
    <property type="entry name" value="ycfN_thiK"/>
    <property type="match status" value="1"/>
</dbReference>
<dbReference type="Pfam" id="PF01636">
    <property type="entry name" value="APH"/>
    <property type="match status" value="1"/>
</dbReference>
<dbReference type="SUPFAM" id="SSF56112">
    <property type="entry name" value="Protein kinase-like (PK-like)"/>
    <property type="match status" value="1"/>
</dbReference>
<reference key="1">
    <citation type="journal article" date="2008" name="Genome Res.">
        <title>Comparative genome analysis of Salmonella enteritidis PT4 and Salmonella gallinarum 287/91 provides insights into evolutionary and host adaptation pathways.</title>
        <authorList>
            <person name="Thomson N.R."/>
            <person name="Clayton D.J."/>
            <person name="Windhorst D."/>
            <person name="Vernikos G."/>
            <person name="Davidson S."/>
            <person name="Churcher C."/>
            <person name="Quail M.A."/>
            <person name="Stevens M."/>
            <person name="Jones M.A."/>
            <person name="Watson M."/>
            <person name="Barron A."/>
            <person name="Layton A."/>
            <person name="Pickard D."/>
            <person name="Kingsley R.A."/>
            <person name="Bignell A."/>
            <person name="Clark L."/>
            <person name="Harris B."/>
            <person name="Ormond D."/>
            <person name="Abdellah Z."/>
            <person name="Brooks K."/>
            <person name="Cherevach I."/>
            <person name="Chillingworth T."/>
            <person name="Woodward J."/>
            <person name="Norberczak H."/>
            <person name="Lord A."/>
            <person name="Arrowsmith C."/>
            <person name="Jagels K."/>
            <person name="Moule S."/>
            <person name="Mungall K."/>
            <person name="Saunders M."/>
            <person name="Whitehead S."/>
            <person name="Chabalgoity J.A."/>
            <person name="Maskell D."/>
            <person name="Humphreys T."/>
            <person name="Roberts M."/>
            <person name="Barrow P.A."/>
            <person name="Dougan G."/>
            <person name="Parkhill J."/>
        </authorList>
    </citation>
    <scope>NUCLEOTIDE SEQUENCE [LARGE SCALE GENOMIC DNA]</scope>
    <source>
        <strain>287/91 / NCTC 13346</strain>
    </source>
</reference>
<feature type="chain" id="PRO_1000198097" description="Thiamine kinase">
    <location>
        <begin position="1"/>
        <end position="274"/>
    </location>
</feature>
<sequence>MRSNNNNPLTRDEILSRYFPQYRPAVAASQGLSGGSCIIAHDTHRIVLRRHHDPDAPPAHFLRHYRALSQLPASLAPRALFYTPGWMAVEYLHGVVNSALPDAEELAALLYHLQQQPRFGWRIALSPLLAQYWSCCDPARRTPFWLRRLKQLQKNGEPRPLRLAPLHMDVHGDNIVLTSAGLRLIDWEYAGDGDIALELAAVWVEDERQHRQLADAYAARARIDARQLWRQIRLWHPWVIMLKAGWFEYRWRQTGEQQFIRLADETWRQLRMKG</sequence>
<organism>
    <name type="scientific">Salmonella gallinarum (strain 287/91 / NCTC 13346)</name>
    <dbReference type="NCBI Taxonomy" id="550538"/>
    <lineage>
        <taxon>Bacteria</taxon>
        <taxon>Pseudomonadati</taxon>
        <taxon>Pseudomonadota</taxon>
        <taxon>Gammaproteobacteria</taxon>
        <taxon>Enterobacterales</taxon>
        <taxon>Enterobacteriaceae</taxon>
        <taxon>Salmonella</taxon>
    </lineage>
</organism>
<protein>
    <recommendedName>
        <fullName evidence="1">Thiamine kinase</fullName>
        <ecNumber evidence="1">2.7.1.89</ecNumber>
    </recommendedName>
</protein>
<name>THIK_SALG2</name>
<evidence type="ECO:0000255" key="1">
    <source>
        <dbReference type="HAMAP-Rule" id="MF_01604"/>
    </source>
</evidence>
<gene>
    <name evidence="1" type="primary">thiK</name>
    <name type="ordered locus">SG1914</name>
</gene>
<accession>B5RB94</accession>